<sequence>MRLLILALLGICSLTAYIVEGVGSEVSHRRTCVSLTTQRLPVSRIKTYTITEGSLRAVIFITKRGLKVCADPQATWVRDVVRSMDRKSNTRNNMIQTKPTGTQQSTNTAVTLTG</sequence>
<proteinExistence type="evidence at protein level"/>
<name>XCL2_HUMAN</name>
<reference key="1">
    <citation type="journal article" date="1996" name="FEBS Lett.">
        <title>Structure and expression of two highly related genes encoding SCM-1/human lymphotactin.</title>
        <authorList>
            <person name="Yoshida T."/>
            <person name="Imai T."/>
            <person name="Takagi S."/>
            <person name="Nishimura M."/>
            <person name="Ishikawa I."/>
            <person name="Yaoi T."/>
            <person name="Yoshie O."/>
        </authorList>
    </citation>
    <scope>NUCLEOTIDE SEQUENCE [GENOMIC DNA]</scope>
    <source>
        <tissue>Placenta</tissue>
    </source>
</reference>
<reference key="2">
    <citation type="journal article" date="2006" name="Nature">
        <title>The DNA sequence and biological annotation of human chromosome 1.</title>
        <authorList>
            <person name="Gregory S.G."/>
            <person name="Barlow K.F."/>
            <person name="McLay K.E."/>
            <person name="Kaul R."/>
            <person name="Swarbreck D."/>
            <person name="Dunham A."/>
            <person name="Scott C.E."/>
            <person name="Howe K.L."/>
            <person name="Woodfine K."/>
            <person name="Spencer C.C.A."/>
            <person name="Jones M.C."/>
            <person name="Gillson C."/>
            <person name="Searle S."/>
            <person name="Zhou Y."/>
            <person name="Kokocinski F."/>
            <person name="McDonald L."/>
            <person name="Evans R."/>
            <person name="Phillips K."/>
            <person name="Atkinson A."/>
            <person name="Cooper R."/>
            <person name="Jones C."/>
            <person name="Hall R.E."/>
            <person name="Andrews T.D."/>
            <person name="Lloyd C."/>
            <person name="Ainscough R."/>
            <person name="Almeida J.P."/>
            <person name="Ambrose K.D."/>
            <person name="Anderson F."/>
            <person name="Andrew R.W."/>
            <person name="Ashwell R.I.S."/>
            <person name="Aubin K."/>
            <person name="Babbage A.K."/>
            <person name="Bagguley C.L."/>
            <person name="Bailey J."/>
            <person name="Beasley H."/>
            <person name="Bethel G."/>
            <person name="Bird C.P."/>
            <person name="Bray-Allen S."/>
            <person name="Brown J.Y."/>
            <person name="Brown A.J."/>
            <person name="Buckley D."/>
            <person name="Burton J."/>
            <person name="Bye J."/>
            <person name="Carder C."/>
            <person name="Chapman J.C."/>
            <person name="Clark S.Y."/>
            <person name="Clarke G."/>
            <person name="Clee C."/>
            <person name="Cobley V."/>
            <person name="Collier R.E."/>
            <person name="Corby N."/>
            <person name="Coville G.J."/>
            <person name="Davies J."/>
            <person name="Deadman R."/>
            <person name="Dunn M."/>
            <person name="Earthrowl M."/>
            <person name="Ellington A.G."/>
            <person name="Errington H."/>
            <person name="Frankish A."/>
            <person name="Frankland J."/>
            <person name="French L."/>
            <person name="Garner P."/>
            <person name="Garnett J."/>
            <person name="Gay L."/>
            <person name="Ghori M.R.J."/>
            <person name="Gibson R."/>
            <person name="Gilby L.M."/>
            <person name="Gillett W."/>
            <person name="Glithero R.J."/>
            <person name="Grafham D.V."/>
            <person name="Griffiths C."/>
            <person name="Griffiths-Jones S."/>
            <person name="Grocock R."/>
            <person name="Hammond S."/>
            <person name="Harrison E.S.I."/>
            <person name="Hart E."/>
            <person name="Haugen E."/>
            <person name="Heath P.D."/>
            <person name="Holmes S."/>
            <person name="Holt K."/>
            <person name="Howden P.J."/>
            <person name="Hunt A.R."/>
            <person name="Hunt S.E."/>
            <person name="Hunter G."/>
            <person name="Isherwood J."/>
            <person name="James R."/>
            <person name="Johnson C."/>
            <person name="Johnson D."/>
            <person name="Joy A."/>
            <person name="Kay M."/>
            <person name="Kershaw J.K."/>
            <person name="Kibukawa M."/>
            <person name="Kimberley A.M."/>
            <person name="King A."/>
            <person name="Knights A.J."/>
            <person name="Lad H."/>
            <person name="Laird G."/>
            <person name="Lawlor S."/>
            <person name="Leongamornlert D.A."/>
            <person name="Lloyd D.M."/>
            <person name="Loveland J."/>
            <person name="Lovell J."/>
            <person name="Lush M.J."/>
            <person name="Lyne R."/>
            <person name="Martin S."/>
            <person name="Mashreghi-Mohammadi M."/>
            <person name="Matthews L."/>
            <person name="Matthews N.S.W."/>
            <person name="McLaren S."/>
            <person name="Milne S."/>
            <person name="Mistry S."/>
            <person name="Moore M.J.F."/>
            <person name="Nickerson T."/>
            <person name="O'Dell C.N."/>
            <person name="Oliver K."/>
            <person name="Palmeiri A."/>
            <person name="Palmer S.A."/>
            <person name="Parker A."/>
            <person name="Patel D."/>
            <person name="Pearce A.V."/>
            <person name="Peck A.I."/>
            <person name="Pelan S."/>
            <person name="Phelps K."/>
            <person name="Phillimore B.J."/>
            <person name="Plumb R."/>
            <person name="Rajan J."/>
            <person name="Raymond C."/>
            <person name="Rouse G."/>
            <person name="Saenphimmachak C."/>
            <person name="Sehra H.K."/>
            <person name="Sheridan E."/>
            <person name="Shownkeen R."/>
            <person name="Sims S."/>
            <person name="Skuce C.D."/>
            <person name="Smith M."/>
            <person name="Steward C."/>
            <person name="Subramanian S."/>
            <person name="Sycamore N."/>
            <person name="Tracey A."/>
            <person name="Tromans A."/>
            <person name="Van Helmond Z."/>
            <person name="Wall M."/>
            <person name="Wallis J.M."/>
            <person name="White S."/>
            <person name="Whitehead S.L."/>
            <person name="Wilkinson J.E."/>
            <person name="Willey D.L."/>
            <person name="Williams H."/>
            <person name="Wilming L."/>
            <person name="Wray P.W."/>
            <person name="Wu Z."/>
            <person name="Coulson A."/>
            <person name="Vaudin M."/>
            <person name="Sulston J.E."/>
            <person name="Durbin R.M."/>
            <person name="Hubbard T."/>
            <person name="Wooster R."/>
            <person name="Dunham I."/>
            <person name="Carter N.P."/>
            <person name="McVean G."/>
            <person name="Ross M.T."/>
            <person name="Harrow J."/>
            <person name="Olson M.V."/>
            <person name="Beck S."/>
            <person name="Rogers J."/>
            <person name="Bentley D.R."/>
        </authorList>
    </citation>
    <scope>NUCLEOTIDE SEQUENCE [LARGE SCALE GENOMIC DNA]</scope>
</reference>
<reference key="3">
    <citation type="journal article" date="2004" name="Genome Res.">
        <title>The status, quality, and expansion of the NIH full-length cDNA project: the Mammalian Gene Collection (MGC).</title>
        <authorList>
            <consortium name="The MGC Project Team"/>
        </authorList>
    </citation>
    <scope>NUCLEOTIDE SEQUENCE [LARGE SCALE MRNA]</scope>
    <source>
        <tissue>Blood</tissue>
    </source>
</reference>
<reference key="4">
    <citation type="journal article" date="2004" name="Protein Sci.">
        <title>Signal peptide prediction based on analysis of experimentally verified cleavage sites.</title>
        <authorList>
            <person name="Zhang Z."/>
            <person name="Henzel W.J."/>
        </authorList>
    </citation>
    <scope>PROTEIN SEQUENCE OF 22-36</scope>
</reference>
<protein>
    <recommendedName>
        <fullName>Cytokine SCM-1 beta</fullName>
    </recommendedName>
    <alternativeName>
        <fullName>C motif chemokine 2</fullName>
    </alternativeName>
    <alternativeName>
        <fullName>XC chemokine ligand 2</fullName>
    </alternativeName>
</protein>
<dbReference type="EMBL" id="D63789">
    <property type="protein sequence ID" value="BAA09858.1"/>
    <property type="molecule type" value="Genomic_DNA"/>
</dbReference>
<dbReference type="EMBL" id="AL031736">
    <property type="status" value="NOT_ANNOTATED_CDS"/>
    <property type="molecule type" value="Genomic_DNA"/>
</dbReference>
<dbReference type="EMBL" id="BC069360">
    <property type="protein sequence ID" value="AAH69360.1"/>
    <property type="molecule type" value="mRNA"/>
</dbReference>
<dbReference type="EMBL" id="BC070308">
    <property type="protein sequence ID" value="AAH70308.1"/>
    <property type="molecule type" value="mRNA"/>
</dbReference>
<dbReference type="CCDS" id="CCDS1273.1"/>
<dbReference type="RefSeq" id="NP_003166.1">
    <property type="nucleotide sequence ID" value="NM_003175.4"/>
</dbReference>
<dbReference type="BMRB" id="Q9UBD3"/>
<dbReference type="SMR" id="Q9UBD3"/>
<dbReference type="BioGRID" id="112713">
    <property type="interactions" value="18"/>
</dbReference>
<dbReference type="FunCoup" id="Q9UBD3">
    <property type="interactions" value="613"/>
</dbReference>
<dbReference type="IntAct" id="Q9UBD3">
    <property type="interactions" value="17"/>
</dbReference>
<dbReference type="STRING" id="9606.ENSP00000356793"/>
<dbReference type="iPTMnet" id="Q9UBD3"/>
<dbReference type="PhosphoSitePlus" id="Q9UBD3"/>
<dbReference type="BioMuta" id="XCL2"/>
<dbReference type="DMDM" id="11387207"/>
<dbReference type="MassIVE" id="Q9UBD3"/>
<dbReference type="PaxDb" id="9606-ENSP00000356793"/>
<dbReference type="Antibodypedia" id="72227">
    <property type="antibodies" value="20 antibodies from 12 providers"/>
</dbReference>
<dbReference type="DNASU" id="6846"/>
<dbReference type="Ensembl" id="ENST00000367819.3">
    <property type="protein sequence ID" value="ENSP00000356793.2"/>
    <property type="gene ID" value="ENSG00000143185.4"/>
</dbReference>
<dbReference type="GeneID" id="6846"/>
<dbReference type="KEGG" id="hsa:6846"/>
<dbReference type="MANE-Select" id="ENST00000367819.3">
    <property type="protein sequence ID" value="ENSP00000356793.2"/>
    <property type="RefSeq nucleotide sequence ID" value="NM_003175.4"/>
    <property type="RefSeq protein sequence ID" value="NP_003166.1"/>
</dbReference>
<dbReference type="UCSC" id="uc001gfn.4">
    <property type="organism name" value="human"/>
</dbReference>
<dbReference type="AGR" id="HGNC:10646"/>
<dbReference type="CTD" id="6846"/>
<dbReference type="DisGeNET" id="6846"/>
<dbReference type="GeneCards" id="XCL2"/>
<dbReference type="HGNC" id="HGNC:10646">
    <property type="gene designation" value="XCL2"/>
</dbReference>
<dbReference type="HPA" id="ENSG00000143185">
    <property type="expression patterns" value="Tissue enhanced (bone marrow, lymphoid tissue)"/>
</dbReference>
<dbReference type="MIM" id="604828">
    <property type="type" value="gene"/>
</dbReference>
<dbReference type="neXtProt" id="NX_Q9UBD3"/>
<dbReference type="OpenTargets" id="ENSG00000143185"/>
<dbReference type="PharmGKB" id="PA35576"/>
<dbReference type="VEuPathDB" id="HostDB:ENSG00000143185"/>
<dbReference type="eggNOG" id="ENOG502S6ZP">
    <property type="taxonomic scope" value="Eukaryota"/>
</dbReference>
<dbReference type="GeneTree" id="ENSGT01130000278316"/>
<dbReference type="HOGENOM" id="CLU_141716_2_0_1"/>
<dbReference type="InParanoid" id="Q9UBD3"/>
<dbReference type="OMA" id="IVNYEKQ"/>
<dbReference type="OrthoDB" id="9906867at2759"/>
<dbReference type="PAN-GO" id="Q9UBD3">
    <property type="GO annotations" value="15 GO annotations based on evolutionary models"/>
</dbReference>
<dbReference type="PhylomeDB" id="Q9UBD3"/>
<dbReference type="TreeFam" id="TF334888"/>
<dbReference type="PathwayCommons" id="Q9UBD3"/>
<dbReference type="Reactome" id="R-HSA-380108">
    <property type="pathway name" value="Chemokine receptors bind chemokines"/>
</dbReference>
<dbReference type="Reactome" id="R-HSA-416476">
    <property type="pathway name" value="G alpha (q) signalling events"/>
</dbReference>
<dbReference type="SignaLink" id="Q9UBD3"/>
<dbReference type="BioGRID-ORCS" id="6846">
    <property type="hits" value="14 hits in 1036 CRISPR screens"/>
</dbReference>
<dbReference type="GenomeRNAi" id="6846"/>
<dbReference type="Pharos" id="Q9UBD3">
    <property type="development level" value="Tbio"/>
</dbReference>
<dbReference type="PRO" id="PR:Q9UBD3"/>
<dbReference type="Proteomes" id="UP000005640">
    <property type="component" value="Chromosome 1"/>
</dbReference>
<dbReference type="RNAct" id="Q9UBD3">
    <property type="molecule type" value="protein"/>
</dbReference>
<dbReference type="Bgee" id="ENSG00000143185">
    <property type="expression patterns" value="Expressed in granulocyte and 91 other cell types or tissues"/>
</dbReference>
<dbReference type="GO" id="GO:0005576">
    <property type="term" value="C:extracellular region"/>
    <property type="evidence" value="ECO:0000304"/>
    <property type="project" value="Reactome"/>
</dbReference>
<dbReference type="GO" id="GO:0005615">
    <property type="term" value="C:extracellular space"/>
    <property type="evidence" value="ECO:0000318"/>
    <property type="project" value="GO_Central"/>
</dbReference>
<dbReference type="GO" id="GO:0048020">
    <property type="term" value="F:CCR chemokine receptor binding"/>
    <property type="evidence" value="ECO:0000318"/>
    <property type="project" value="GO_Central"/>
</dbReference>
<dbReference type="GO" id="GO:0008009">
    <property type="term" value="F:chemokine activity"/>
    <property type="evidence" value="ECO:0000318"/>
    <property type="project" value="GO_Central"/>
</dbReference>
<dbReference type="GO" id="GO:0061844">
    <property type="term" value="P:antimicrobial humoral immune response mediated by antimicrobial peptide"/>
    <property type="evidence" value="ECO:0000318"/>
    <property type="project" value="GO_Central"/>
</dbReference>
<dbReference type="GO" id="GO:0008015">
    <property type="term" value="P:blood circulation"/>
    <property type="evidence" value="ECO:0000304"/>
    <property type="project" value="ProtInc"/>
</dbReference>
<dbReference type="GO" id="GO:0060326">
    <property type="term" value="P:cell chemotaxis"/>
    <property type="evidence" value="ECO:0000318"/>
    <property type="project" value="GO_Central"/>
</dbReference>
<dbReference type="GO" id="GO:0070098">
    <property type="term" value="P:chemokine-mediated signaling pathway"/>
    <property type="evidence" value="ECO:0000318"/>
    <property type="project" value="GO_Central"/>
</dbReference>
<dbReference type="GO" id="GO:0006954">
    <property type="term" value="P:inflammatory response"/>
    <property type="evidence" value="ECO:0000318"/>
    <property type="project" value="GO_Central"/>
</dbReference>
<dbReference type="GO" id="GO:0030335">
    <property type="term" value="P:positive regulation of cell migration"/>
    <property type="evidence" value="ECO:0000318"/>
    <property type="project" value="GO_Central"/>
</dbReference>
<dbReference type="GO" id="GO:0007165">
    <property type="term" value="P:signal transduction"/>
    <property type="evidence" value="ECO:0000304"/>
    <property type="project" value="ProtInc"/>
</dbReference>
<dbReference type="CDD" id="cd00271">
    <property type="entry name" value="Chemokine_C"/>
    <property type="match status" value="1"/>
</dbReference>
<dbReference type="FunFam" id="2.40.50.40:FF:000023">
    <property type="entry name" value="Lymphotactin isoform X1"/>
    <property type="match status" value="1"/>
</dbReference>
<dbReference type="Gene3D" id="2.40.50.40">
    <property type="match status" value="1"/>
</dbReference>
<dbReference type="InterPro" id="IPR039809">
    <property type="entry name" value="Chemokine_b/g/d"/>
</dbReference>
<dbReference type="InterPro" id="IPR001811">
    <property type="entry name" value="Chemokine_IL8-like_dom"/>
</dbReference>
<dbReference type="InterPro" id="IPR008105">
    <property type="entry name" value="Chemokine_XCL1/XCL2"/>
</dbReference>
<dbReference type="InterPro" id="IPR036048">
    <property type="entry name" value="Interleukin_8-like_sf"/>
</dbReference>
<dbReference type="PANTHER" id="PTHR12015:SF101">
    <property type="entry name" value="CYTOKINE SCM-1 BETA-RELATED"/>
    <property type="match status" value="1"/>
</dbReference>
<dbReference type="PANTHER" id="PTHR12015">
    <property type="entry name" value="SMALL INDUCIBLE CYTOKINE A"/>
    <property type="match status" value="1"/>
</dbReference>
<dbReference type="Pfam" id="PF00048">
    <property type="entry name" value="IL8"/>
    <property type="match status" value="1"/>
</dbReference>
<dbReference type="PRINTS" id="PR01731">
    <property type="entry name" value="LYMPHOTACTIN"/>
</dbReference>
<dbReference type="SMART" id="SM00199">
    <property type="entry name" value="SCY"/>
    <property type="match status" value="1"/>
</dbReference>
<dbReference type="SUPFAM" id="SSF54117">
    <property type="entry name" value="Interleukin 8-like chemokines"/>
    <property type="match status" value="1"/>
</dbReference>
<comment type="function">
    <text evidence="1">Chemotactic activity for lymphocytes but not for monocytes or neutrophils.</text>
</comment>
<comment type="interaction">
    <interactant intactId="EBI-10319095">
        <id>Q9UBD3</id>
    </interactant>
    <interactant intactId="EBI-2848366">
        <id>P13501</id>
        <label>CCL5</label>
    </interactant>
    <organismsDiffer>false</organismsDiffer>
    <experiments>2</experiments>
</comment>
<comment type="interaction">
    <interactant intactId="EBI-10319095">
        <id>Q9UBD3</id>
    </interactant>
    <interactant intactId="EBI-3913254">
        <id>P48061</id>
        <label>CXCL12</label>
    </interactant>
    <organismsDiffer>false</organismsDiffer>
    <experiments>2</experiments>
</comment>
<comment type="interaction">
    <interactant intactId="EBI-10319095">
        <id>Q9UBD3</id>
    </interactant>
    <interactant intactId="EBI-11749135">
        <id>Q8IUG1</id>
        <label>KRTAP1-3</label>
    </interactant>
    <organismsDiffer>false</organismsDiffer>
    <experiments>3</experiments>
</comment>
<comment type="interaction">
    <interactant intactId="EBI-10319095">
        <id>Q9UBD3</id>
    </interactant>
    <interactant intactId="EBI-10172052">
        <id>P60411</id>
        <label>KRTAP10-9</label>
    </interactant>
    <organismsDiffer>false</organismsDiffer>
    <experiments>3</experiments>
</comment>
<comment type="interaction">
    <interactant intactId="EBI-10319095">
        <id>Q9UBD3</id>
    </interactant>
    <interactant intactId="EBI-945833">
        <id>Q7Z3S9</id>
        <label>NOTCH2NLA</label>
    </interactant>
    <organismsDiffer>false</organismsDiffer>
    <experiments>3</experiments>
</comment>
<comment type="subcellular location">
    <subcellularLocation>
        <location>Secreted</location>
    </subcellularLocation>
</comment>
<comment type="similarity">
    <text evidence="5">Belongs to the intercrine gamma family.</text>
</comment>
<comment type="online information" name="Wikipedia">
    <link uri="https://en.wikipedia.org/wiki/XCL2"/>
    <text>XCL2 entry</text>
</comment>
<evidence type="ECO:0000250" key="1"/>
<evidence type="ECO:0000255" key="2"/>
<evidence type="ECO:0000256" key="3">
    <source>
        <dbReference type="SAM" id="MobiDB-lite"/>
    </source>
</evidence>
<evidence type="ECO:0000269" key="4">
    <source>
    </source>
</evidence>
<evidence type="ECO:0000305" key="5"/>
<accession>Q9UBD3</accession>
<organism>
    <name type="scientific">Homo sapiens</name>
    <name type="common">Human</name>
    <dbReference type="NCBI Taxonomy" id="9606"/>
    <lineage>
        <taxon>Eukaryota</taxon>
        <taxon>Metazoa</taxon>
        <taxon>Chordata</taxon>
        <taxon>Craniata</taxon>
        <taxon>Vertebrata</taxon>
        <taxon>Euteleostomi</taxon>
        <taxon>Mammalia</taxon>
        <taxon>Eutheria</taxon>
        <taxon>Euarchontoglires</taxon>
        <taxon>Primates</taxon>
        <taxon>Haplorrhini</taxon>
        <taxon>Catarrhini</taxon>
        <taxon>Hominidae</taxon>
        <taxon>Homo</taxon>
    </lineage>
</organism>
<keyword id="KW-0145">Chemotaxis</keyword>
<keyword id="KW-0202">Cytokine</keyword>
<keyword id="KW-0903">Direct protein sequencing</keyword>
<keyword id="KW-1015">Disulfide bond</keyword>
<keyword id="KW-1185">Reference proteome</keyword>
<keyword id="KW-0964">Secreted</keyword>
<keyword id="KW-0732">Signal</keyword>
<feature type="signal peptide" evidence="4">
    <location>
        <begin position="1"/>
        <end position="21"/>
    </location>
</feature>
<feature type="chain" id="PRO_0000005251" description="Cytokine SCM-1 beta">
    <location>
        <begin position="22"/>
        <end position="114"/>
    </location>
</feature>
<feature type="region of interest" description="Disordered" evidence="3">
    <location>
        <begin position="91"/>
        <end position="114"/>
    </location>
</feature>
<feature type="disulfide bond" evidence="2">
    <location>
        <begin position="32"/>
        <end position="69"/>
    </location>
</feature>
<feature type="sequence variant" id="VAR_048713" description="In dbSNP:rs4301615.">
    <original>H</original>
    <variation>D</variation>
    <location>
        <position position="28"/>
    </location>
</feature>
<feature type="sequence variant" id="VAR_059212" description="In dbSNP:rs4501820.">
    <original>R</original>
    <variation>K</variation>
    <location>
        <position position="29"/>
    </location>
</feature>
<gene>
    <name type="primary">XCL2</name>
    <name type="synonym">SCYC2</name>
</gene>